<comment type="catalytic activity">
    <reaction evidence="1">
        <text>Hydrolysis of terminal, non-reducing beta-D-glucosyl residues with release of beta-D-glucose.</text>
        <dbReference type="EC" id="3.2.1.21"/>
    </reaction>
</comment>
<comment type="similarity">
    <text evidence="6">Belongs to the glycosyl hydrolase 1 family.</text>
</comment>
<organism>
    <name type="scientific">Oryza sativa subsp. japonica</name>
    <name type="common">Rice</name>
    <dbReference type="NCBI Taxonomy" id="39947"/>
    <lineage>
        <taxon>Eukaryota</taxon>
        <taxon>Viridiplantae</taxon>
        <taxon>Streptophyta</taxon>
        <taxon>Embryophyta</taxon>
        <taxon>Tracheophyta</taxon>
        <taxon>Spermatophyta</taxon>
        <taxon>Magnoliopsida</taxon>
        <taxon>Liliopsida</taxon>
        <taxon>Poales</taxon>
        <taxon>Poaceae</taxon>
        <taxon>BOP clade</taxon>
        <taxon>Oryzoideae</taxon>
        <taxon>Oryzeae</taxon>
        <taxon>Oryzinae</taxon>
        <taxon>Oryza</taxon>
        <taxon>Oryza sativa</taxon>
    </lineage>
</organism>
<evidence type="ECO:0000250" key="1">
    <source>
        <dbReference type="UniProtKB" id="Q75I94"/>
    </source>
</evidence>
<evidence type="ECO:0000250" key="2">
    <source>
        <dbReference type="UniProtKB" id="Q7XSK0"/>
    </source>
</evidence>
<evidence type="ECO:0000250" key="3">
    <source>
        <dbReference type="UniProtKB" id="Q9SPP9"/>
    </source>
</evidence>
<evidence type="ECO:0000255" key="4"/>
<evidence type="ECO:0000255" key="5">
    <source>
        <dbReference type="PROSITE-ProRule" id="PRU00498"/>
    </source>
</evidence>
<evidence type="ECO:0000305" key="6"/>
<gene>
    <name type="primary">BGLU2</name>
    <name type="ordered locus">Os01g0813700</name>
    <name type="ordered locus">LOC_Os01g59819</name>
</gene>
<accession>B7F8N7</accession>
<accession>A0A0P0V9H8</accession>
<feature type="signal peptide" evidence="4">
    <location>
        <begin position="1"/>
        <end position="24"/>
    </location>
</feature>
<feature type="chain" id="PRO_0000390321" description="Beta-glucosidase 2">
    <location>
        <begin position="25"/>
        <end position="500"/>
    </location>
</feature>
<feature type="active site" description="Proton donor" evidence="2">
    <location>
        <position position="190"/>
    </location>
</feature>
<feature type="active site" description="Nucleophile" evidence="2">
    <location>
        <position position="403"/>
    </location>
</feature>
<feature type="binding site" evidence="2">
    <location>
        <position position="44"/>
    </location>
    <ligand>
        <name>a beta-D-glucoside</name>
        <dbReference type="ChEBI" id="CHEBI:22798"/>
    </ligand>
</feature>
<feature type="binding site" evidence="2">
    <location>
        <position position="144"/>
    </location>
    <ligand>
        <name>a beta-D-glucoside</name>
        <dbReference type="ChEBI" id="CHEBI:22798"/>
    </ligand>
</feature>
<feature type="binding site" evidence="2">
    <location>
        <position position="334"/>
    </location>
    <ligand>
        <name>a beta-D-glucoside</name>
        <dbReference type="ChEBI" id="CHEBI:22798"/>
    </ligand>
</feature>
<feature type="binding site" evidence="3">
    <location>
        <position position="403"/>
    </location>
    <ligand>
        <name>a beta-D-glucoside</name>
        <dbReference type="ChEBI" id="CHEBI:22798"/>
    </ligand>
</feature>
<feature type="binding site" evidence="2">
    <location>
        <position position="445"/>
    </location>
    <ligand>
        <name>a beta-D-glucoside</name>
        <dbReference type="ChEBI" id="CHEBI:22798"/>
    </ligand>
</feature>
<feature type="glycosylation site" description="N-linked (GlcNAc...) asparagine" evidence="5">
    <location>
        <position position="222"/>
    </location>
</feature>
<feature type="glycosylation site" description="N-linked (GlcNAc...) asparagine" evidence="5">
    <location>
        <position position="410"/>
    </location>
</feature>
<feature type="disulfide bond" evidence="2">
    <location>
        <begin position="209"/>
        <end position="218"/>
    </location>
</feature>
<keyword id="KW-1015">Disulfide bond</keyword>
<keyword id="KW-0325">Glycoprotein</keyword>
<keyword id="KW-0326">Glycosidase</keyword>
<keyword id="KW-0378">Hydrolase</keyword>
<keyword id="KW-1185">Reference proteome</keyword>
<keyword id="KW-0732">Signal</keyword>
<reference key="1">
    <citation type="journal article" date="2002" name="Nature">
        <title>The genome sequence and structure of rice chromosome 1.</title>
        <authorList>
            <person name="Sasaki T."/>
            <person name="Matsumoto T."/>
            <person name="Yamamoto K."/>
            <person name="Sakata K."/>
            <person name="Baba T."/>
            <person name="Katayose Y."/>
            <person name="Wu J."/>
            <person name="Niimura Y."/>
            <person name="Cheng Z."/>
            <person name="Nagamura Y."/>
            <person name="Antonio B.A."/>
            <person name="Kanamori H."/>
            <person name="Hosokawa S."/>
            <person name="Masukawa M."/>
            <person name="Arikawa K."/>
            <person name="Chiden Y."/>
            <person name="Hayashi M."/>
            <person name="Okamoto M."/>
            <person name="Ando T."/>
            <person name="Aoki H."/>
            <person name="Arita K."/>
            <person name="Hamada M."/>
            <person name="Harada C."/>
            <person name="Hijishita S."/>
            <person name="Honda M."/>
            <person name="Ichikawa Y."/>
            <person name="Idonuma A."/>
            <person name="Iijima M."/>
            <person name="Ikeda M."/>
            <person name="Ikeno M."/>
            <person name="Ito S."/>
            <person name="Ito T."/>
            <person name="Ito Y."/>
            <person name="Ito Y."/>
            <person name="Iwabuchi A."/>
            <person name="Kamiya K."/>
            <person name="Karasawa W."/>
            <person name="Katagiri S."/>
            <person name="Kikuta A."/>
            <person name="Kobayashi N."/>
            <person name="Kono I."/>
            <person name="Machita K."/>
            <person name="Maehara T."/>
            <person name="Mizuno H."/>
            <person name="Mizubayashi T."/>
            <person name="Mukai Y."/>
            <person name="Nagasaki H."/>
            <person name="Nakashima M."/>
            <person name="Nakama Y."/>
            <person name="Nakamichi Y."/>
            <person name="Nakamura M."/>
            <person name="Namiki N."/>
            <person name="Negishi M."/>
            <person name="Ohta I."/>
            <person name="Ono N."/>
            <person name="Saji S."/>
            <person name="Sakai K."/>
            <person name="Shibata M."/>
            <person name="Shimokawa T."/>
            <person name="Shomura A."/>
            <person name="Song J."/>
            <person name="Takazaki Y."/>
            <person name="Terasawa K."/>
            <person name="Tsuji K."/>
            <person name="Waki K."/>
            <person name="Yamagata H."/>
            <person name="Yamane H."/>
            <person name="Yoshiki S."/>
            <person name="Yoshihara R."/>
            <person name="Yukawa K."/>
            <person name="Zhong H."/>
            <person name="Iwama H."/>
            <person name="Endo T."/>
            <person name="Ito H."/>
            <person name="Hahn J.H."/>
            <person name="Kim H.-I."/>
            <person name="Eun M.-Y."/>
            <person name="Yano M."/>
            <person name="Jiang J."/>
            <person name="Gojobori T."/>
        </authorList>
    </citation>
    <scope>NUCLEOTIDE SEQUENCE [LARGE SCALE GENOMIC DNA]</scope>
    <source>
        <strain>cv. Nipponbare</strain>
    </source>
</reference>
<reference key="2">
    <citation type="journal article" date="2005" name="Nature">
        <title>The map-based sequence of the rice genome.</title>
        <authorList>
            <consortium name="International rice genome sequencing project (IRGSP)"/>
        </authorList>
    </citation>
    <scope>NUCLEOTIDE SEQUENCE [LARGE SCALE GENOMIC DNA]</scope>
    <source>
        <strain>cv. Nipponbare</strain>
    </source>
</reference>
<reference key="3">
    <citation type="journal article" date="2013" name="Rice">
        <title>Improvement of the Oryza sativa Nipponbare reference genome using next generation sequence and optical map data.</title>
        <authorList>
            <person name="Kawahara Y."/>
            <person name="de la Bastide M."/>
            <person name="Hamilton J.P."/>
            <person name="Kanamori H."/>
            <person name="McCombie W.R."/>
            <person name="Ouyang S."/>
            <person name="Schwartz D.C."/>
            <person name="Tanaka T."/>
            <person name="Wu J."/>
            <person name="Zhou S."/>
            <person name="Childs K.L."/>
            <person name="Davidson R.M."/>
            <person name="Lin H."/>
            <person name="Quesada-Ocampo L."/>
            <person name="Vaillancourt B."/>
            <person name="Sakai H."/>
            <person name="Lee S.S."/>
            <person name="Kim J."/>
            <person name="Numa H."/>
            <person name="Itoh T."/>
            <person name="Buell C.R."/>
            <person name="Matsumoto T."/>
        </authorList>
    </citation>
    <scope>GENOME REANNOTATION</scope>
    <source>
        <strain>cv. Nipponbare</strain>
    </source>
</reference>
<reference key="4">
    <citation type="submission" date="2006-10" db="EMBL/GenBank/DDBJ databases">
        <title>Oryza sativa full length cDNA.</title>
        <authorList>
            <consortium name="The rice full-length cDNA consortium"/>
        </authorList>
    </citation>
    <scope>NUCLEOTIDE SEQUENCE [LARGE SCALE MRNA]</scope>
    <source>
        <strain>cv. Nipponbare</strain>
    </source>
</reference>
<reference key="5">
    <citation type="journal article" date="2006" name="BMC Plant Biol.">
        <title>Analysis of rice glycosyl hydrolase family 1 and expression of Os4bglu12 beta-glucosidase.</title>
        <authorList>
            <person name="Opassiri R."/>
            <person name="Pomthong B."/>
            <person name="Onkoksoong T."/>
            <person name="Akiyama T."/>
            <person name="Esen A."/>
            <person name="Ketudat Cairns J.R."/>
        </authorList>
    </citation>
    <scope>GENE FAMILY</scope>
    <scope>NOMENCLATURE</scope>
</reference>
<sequence>MGAAAAAGFFFVLLFLSVQGGAVGYTRSDFPRDFVFGAATSAYQYDGAAAEDGRSPTIWDTFAHEGKTKDKGTGDVAADGYHKYKGDVKLMAETGLEAYKFSISWSRLIPNGRGAVNQEGLKYYNNVIDELAKRGIQPHIMLCHLDLPQALEDEYDGWLSPRIVDDFTAYADVCFREFGDRVLHWTTLAEPNIAALGGYDTGVLSPGHCSDPFGLTECTVGNSTVEPYITAHNMILTHAAVVRLYREKYQALQKGIVGINMFSLWSYPLTNSIADLQAAQRYKDFSYGWILHPLVFGDYPQVMKKTIDSRLPSFSQVQTELIKGAIDFIGINHYYSAYVNYRPLVEGVRDYVADRSVSARVYKTDPPTEKYEPTEYPNDPKGLQLALEYLRESYGDFPFYIEENGKGSTNDSLDDPDRVDYIKGYIGGVLDAIRNGVDVRGYFVWSFVDVYELLEGYQSRSGLYRVDFDDGARPRRARRSARWYSDFLKGKKDPVLIAPQ</sequence>
<dbReference type="EC" id="3.2.1.21" evidence="1"/>
<dbReference type="EMBL" id="AP004331">
    <property type="status" value="NOT_ANNOTATED_CDS"/>
    <property type="molecule type" value="Genomic_DNA"/>
</dbReference>
<dbReference type="EMBL" id="AP014957">
    <property type="protein sequence ID" value="BAS74896.1"/>
    <property type="molecule type" value="Genomic_DNA"/>
</dbReference>
<dbReference type="EMBL" id="AK241229">
    <property type="protein sequence ID" value="BAH00985.1"/>
    <property type="molecule type" value="mRNA"/>
</dbReference>
<dbReference type="RefSeq" id="XP_015618350.1">
    <property type="nucleotide sequence ID" value="XM_015762864.1"/>
</dbReference>
<dbReference type="SMR" id="B7F8N7"/>
<dbReference type="FunCoup" id="B7F8N7">
    <property type="interactions" value="182"/>
</dbReference>
<dbReference type="STRING" id="39947.B7F8N7"/>
<dbReference type="CAZy" id="GH1">
    <property type="family name" value="Glycoside Hydrolase Family 1"/>
</dbReference>
<dbReference type="GlyCosmos" id="B7F8N7">
    <property type="glycosylation" value="2 sites, No reported glycans"/>
</dbReference>
<dbReference type="PaxDb" id="39947-B7F8N7"/>
<dbReference type="EnsemblPlants" id="Os01t0813700-01">
    <property type="protein sequence ID" value="Os01t0813700-01"/>
    <property type="gene ID" value="Os01g0813700"/>
</dbReference>
<dbReference type="Gramene" id="Os01t0813700-01">
    <property type="protein sequence ID" value="Os01t0813700-01"/>
    <property type="gene ID" value="Os01g0813700"/>
</dbReference>
<dbReference type="eggNOG" id="KOG0626">
    <property type="taxonomic scope" value="Eukaryota"/>
</dbReference>
<dbReference type="HOGENOM" id="CLU_001859_1_0_1"/>
<dbReference type="InParanoid" id="B7F8N7"/>
<dbReference type="OMA" id="SYGWILH"/>
<dbReference type="OrthoDB" id="65569at2759"/>
<dbReference type="Proteomes" id="UP000000763">
    <property type="component" value="Chromosome 1"/>
</dbReference>
<dbReference type="Proteomes" id="UP000059680">
    <property type="component" value="Chromosome 1"/>
</dbReference>
<dbReference type="GO" id="GO:0033907">
    <property type="term" value="F:beta-D-fucosidase activity"/>
    <property type="evidence" value="ECO:0007669"/>
    <property type="project" value="UniProtKB-ARBA"/>
</dbReference>
<dbReference type="GO" id="GO:0004565">
    <property type="term" value="F:beta-galactosidase activity"/>
    <property type="evidence" value="ECO:0007669"/>
    <property type="project" value="UniProtKB-ARBA"/>
</dbReference>
<dbReference type="GO" id="GO:0008422">
    <property type="term" value="F:beta-glucosidase activity"/>
    <property type="evidence" value="ECO:0000318"/>
    <property type="project" value="GO_Central"/>
</dbReference>
<dbReference type="GO" id="GO:0005975">
    <property type="term" value="P:carbohydrate metabolic process"/>
    <property type="evidence" value="ECO:0007669"/>
    <property type="project" value="InterPro"/>
</dbReference>
<dbReference type="FunFam" id="3.20.20.80:FF:000069">
    <property type="entry name" value="Beta-glucosidase 1"/>
    <property type="match status" value="1"/>
</dbReference>
<dbReference type="Gene3D" id="3.20.20.80">
    <property type="entry name" value="Glycosidases"/>
    <property type="match status" value="1"/>
</dbReference>
<dbReference type="InterPro" id="IPR001360">
    <property type="entry name" value="Glyco_hydro_1"/>
</dbReference>
<dbReference type="InterPro" id="IPR017853">
    <property type="entry name" value="Glycoside_hydrolase_SF"/>
</dbReference>
<dbReference type="PANTHER" id="PTHR10353:SF335">
    <property type="entry name" value="BETA-GLUCOSIDASE 2"/>
    <property type="match status" value="1"/>
</dbReference>
<dbReference type="PANTHER" id="PTHR10353">
    <property type="entry name" value="GLYCOSYL HYDROLASE"/>
    <property type="match status" value="1"/>
</dbReference>
<dbReference type="Pfam" id="PF00232">
    <property type="entry name" value="Glyco_hydro_1"/>
    <property type="match status" value="1"/>
</dbReference>
<dbReference type="PRINTS" id="PR00131">
    <property type="entry name" value="GLHYDRLASE1"/>
</dbReference>
<dbReference type="SUPFAM" id="SSF51445">
    <property type="entry name" value="(Trans)glycosidases"/>
    <property type="match status" value="1"/>
</dbReference>
<proteinExistence type="evidence at transcript level"/>
<protein>
    <recommendedName>
        <fullName>Beta-glucosidase 2</fullName>
        <shortName>Os1bglu2</shortName>
        <ecNumber evidence="1">3.2.1.21</ecNumber>
    </recommendedName>
</protein>
<name>BGL02_ORYSJ</name>